<sequence>MSTFGYRRELSKYEDIDEDELLASLTEEELKELERELEDIEPDRNLPVGQRQKSLTEKTPTGTFSREALMAYWERETRKLLEKERLGACEKDSEQEEDNSEDIQEECFTESNSEVSEEAYTEEDDEEEEEEEEEEEDEDDSDDEDEEKQNSAASERPVNCEDGRSSSHVRHKKCSNAKNSENLFNGHDGKDTENLSFKSSAIHPCGNPTVIEDALEKVRSNDPETTEVNLNNIENITSQMLIQFSQALRDNTVVKSFSLANTHADDNVAIAIAGMLKVNQHITSLNIESNFITGKGVLAIMRALQHNKVLTELRFHNQRHIMGSQVEMDIVKLLKENTTLVKLGYHFDLAGPRMSMTSILTRNMDKQRQKRMQEQRQQEYGCDGAINPKTKVLQKGTPRSSPYTSPKSSPWSSPKLPRKSAPAKSQPPAPAPPPPPPPPPPPPPPPPPVIPDKKAPTRNIAEVIKQQESSRKALQNGQKKKKGKKGKKHENSILKEIKDSLKSVSDRKSEEGSRPSTRPSTPQRSLHDNLMEAIRASSIKQLRRVEVPEALR</sequence>
<protein>
    <recommendedName>
        <fullName evidence="7">Leiomodin-2</fullName>
    </recommendedName>
    <alternativeName>
        <fullName>Cardiac leiomodin</fullName>
        <shortName>C-LMOD</shortName>
    </alternativeName>
</protein>
<accession>E1BTG2</accession>
<gene>
    <name type="primary">LMOD2</name>
</gene>
<comment type="function">
    <text evidence="1 2 6">Mediates nucleation of actin filaments and thereby promotes actin polymerization (By similarity). Plays a role in the regulation of actin filament length (PubMed:20736303). Required for normal sarcomere organization in the heart, and for normal heart function (By similarity).</text>
</comment>
<comment type="subunit">
    <text evidence="2">Can bind at least three actin monomers and thereby provides a nucleus for actin filament formation. Interacts (via N-terminus) with tropomyosin alpha (TPM1) (via N-terminus). May also interact with TPM2 (via N-terminus).</text>
</comment>
<comment type="subcellular location">
    <subcellularLocation>
        <location evidence="6">Cytoplasm</location>
        <location evidence="6">Myofibril</location>
        <location evidence="6">Sarcomere</location>
    </subcellularLocation>
    <subcellularLocation>
        <location evidence="6">Cytoplasm</location>
        <location evidence="6">Myofibril</location>
    </subcellularLocation>
    <subcellularLocation>
        <location evidence="6">Cytoplasm</location>
        <location evidence="6">Myofibril</location>
        <location evidence="6">Sarcomere</location>
        <location evidence="6">M line</location>
    </subcellularLocation>
    <subcellularLocation>
        <location evidence="6">Cytoplasm</location>
        <location evidence="6">Cytoskeleton</location>
    </subcellularLocation>
    <text evidence="6">Colocalizes with actin filament pointed ends in sarcomeres. Detected close to the M line.</text>
</comment>
<comment type="developmental stage">
    <text evidence="6">First detected in myocardium at HH stage 14. Detected in myocardium and somites at HH stage 17 and 19.</text>
</comment>
<comment type="similarity">
    <text evidence="8">Belongs to the tropomodulin family.</text>
</comment>
<organism evidence="9">
    <name type="scientific">Gallus gallus</name>
    <name type="common">Chicken</name>
    <dbReference type="NCBI Taxonomy" id="9031"/>
    <lineage>
        <taxon>Eukaryota</taxon>
        <taxon>Metazoa</taxon>
        <taxon>Chordata</taxon>
        <taxon>Craniata</taxon>
        <taxon>Vertebrata</taxon>
        <taxon>Euteleostomi</taxon>
        <taxon>Archelosauria</taxon>
        <taxon>Archosauria</taxon>
        <taxon>Dinosauria</taxon>
        <taxon>Saurischia</taxon>
        <taxon>Theropoda</taxon>
        <taxon>Coelurosauria</taxon>
        <taxon>Aves</taxon>
        <taxon>Neognathae</taxon>
        <taxon>Galloanserae</taxon>
        <taxon>Galliformes</taxon>
        <taxon>Phasianidae</taxon>
        <taxon>Phasianinae</taxon>
        <taxon>Gallus</taxon>
    </lineage>
</organism>
<keyword id="KW-0009">Actin-binding</keyword>
<keyword id="KW-0175">Coiled coil</keyword>
<keyword id="KW-0963">Cytoplasm</keyword>
<keyword id="KW-0206">Cytoskeleton</keyword>
<keyword id="KW-1185">Reference proteome</keyword>
<dbReference type="EMBL" id="AADN03000706">
    <property type="status" value="NOT_ANNOTATED_CDS"/>
    <property type="molecule type" value="Genomic_DNA"/>
</dbReference>
<dbReference type="RefSeq" id="NP_001186644.2">
    <property type="nucleotide sequence ID" value="NM_001199715.2"/>
</dbReference>
<dbReference type="SMR" id="E1BTG2"/>
<dbReference type="FunCoup" id="E1BTG2">
    <property type="interactions" value="34"/>
</dbReference>
<dbReference type="STRING" id="9031.ENSGALP00000014297"/>
<dbReference type="PaxDb" id="9031-ENSGALP00000014297"/>
<dbReference type="GeneID" id="417751"/>
<dbReference type="KEGG" id="gga:417751"/>
<dbReference type="CTD" id="442721"/>
<dbReference type="VEuPathDB" id="HostDB:geneid_417751"/>
<dbReference type="eggNOG" id="KOG3735">
    <property type="taxonomic scope" value="Eukaryota"/>
</dbReference>
<dbReference type="HOGENOM" id="CLU_031052_4_0_1"/>
<dbReference type="InParanoid" id="E1BTG2"/>
<dbReference type="OrthoDB" id="2163268at2759"/>
<dbReference type="TreeFam" id="TF315841"/>
<dbReference type="PRO" id="PR:E1BTG2"/>
<dbReference type="Proteomes" id="UP000000539">
    <property type="component" value="Chromosome 1"/>
</dbReference>
<dbReference type="Bgee" id="ENSGALG00000008805">
    <property type="expression patterns" value="Expressed in heart and 2 other cell types or tissues"/>
</dbReference>
<dbReference type="GO" id="GO:0005884">
    <property type="term" value="C:actin filament"/>
    <property type="evidence" value="ECO:0000314"/>
    <property type="project" value="UniProtKB"/>
</dbReference>
<dbReference type="GO" id="GO:0005856">
    <property type="term" value="C:cytoskeleton"/>
    <property type="evidence" value="ECO:0000318"/>
    <property type="project" value="GO_Central"/>
</dbReference>
<dbReference type="GO" id="GO:0031430">
    <property type="term" value="C:M band"/>
    <property type="evidence" value="ECO:0007669"/>
    <property type="project" value="UniProtKB-SubCell"/>
</dbReference>
<dbReference type="GO" id="GO:0030016">
    <property type="term" value="C:myofibril"/>
    <property type="evidence" value="ECO:0000318"/>
    <property type="project" value="GO_Central"/>
</dbReference>
<dbReference type="GO" id="GO:0005865">
    <property type="term" value="C:striated muscle thin filament"/>
    <property type="evidence" value="ECO:0000318"/>
    <property type="project" value="GO_Central"/>
</dbReference>
<dbReference type="GO" id="GO:0003779">
    <property type="term" value="F:actin binding"/>
    <property type="evidence" value="ECO:0007669"/>
    <property type="project" value="UniProtKB-KW"/>
</dbReference>
<dbReference type="GO" id="GO:0005523">
    <property type="term" value="F:tropomyosin binding"/>
    <property type="evidence" value="ECO:0000318"/>
    <property type="project" value="GO_Central"/>
</dbReference>
<dbReference type="GO" id="GO:0007015">
    <property type="term" value="P:actin filament organization"/>
    <property type="evidence" value="ECO:0000318"/>
    <property type="project" value="GO_Central"/>
</dbReference>
<dbReference type="GO" id="GO:0030041">
    <property type="term" value="P:actin filament polymerization"/>
    <property type="evidence" value="ECO:0000315"/>
    <property type="project" value="UniProtKB"/>
</dbReference>
<dbReference type="GO" id="GO:0006936">
    <property type="term" value="P:muscle contraction"/>
    <property type="evidence" value="ECO:0000318"/>
    <property type="project" value="GO_Central"/>
</dbReference>
<dbReference type="GO" id="GO:0030239">
    <property type="term" value="P:myofibril assembly"/>
    <property type="evidence" value="ECO:0000318"/>
    <property type="project" value="GO_Central"/>
</dbReference>
<dbReference type="GO" id="GO:0051694">
    <property type="term" value="P:pointed-end actin filament capping"/>
    <property type="evidence" value="ECO:0007669"/>
    <property type="project" value="InterPro"/>
</dbReference>
<dbReference type="FunFam" id="3.80.10.10:FF:000132">
    <property type="entry name" value="Leiomodin 2"/>
    <property type="match status" value="1"/>
</dbReference>
<dbReference type="Gene3D" id="3.80.10.10">
    <property type="entry name" value="Ribonuclease Inhibitor"/>
    <property type="match status" value="2"/>
</dbReference>
<dbReference type="InterPro" id="IPR032675">
    <property type="entry name" value="LRR_dom_sf"/>
</dbReference>
<dbReference type="InterPro" id="IPR004934">
    <property type="entry name" value="TMOD"/>
</dbReference>
<dbReference type="InterPro" id="IPR003124">
    <property type="entry name" value="WH2_dom"/>
</dbReference>
<dbReference type="PANTHER" id="PTHR10901:SF12">
    <property type="entry name" value="LEIOMODIN-2"/>
    <property type="match status" value="1"/>
</dbReference>
<dbReference type="PANTHER" id="PTHR10901">
    <property type="entry name" value="TROPOMODULIN"/>
    <property type="match status" value="1"/>
</dbReference>
<dbReference type="Pfam" id="PF03250">
    <property type="entry name" value="Tropomodulin"/>
    <property type="match status" value="1"/>
</dbReference>
<dbReference type="SUPFAM" id="SSF52047">
    <property type="entry name" value="RNI-like"/>
    <property type="match status" value="1"/>
</dbReference>
<dbReference type="PROSITE" id="PS51082">
    <property type="entry name" value="WH2"/>
    <property type="match status" value="1"/>
</dbReference>
<evidence type="ECO:0000250" key="1">
    <source>
        <dbReference type="UniProtKB" id="Q3UHZ5"/>
    </source>
</evidence>
<evidence type="ECO:0000250" key="2">
    <source>
        <dbReference type="UniProtKB" id="Q6P5Q4"/>
    </source>
</evidence>
<evidence type="ECO:0000255" key="3"/>
<evidence type="ECO:0000255" key="4">
    <source>
        <dbReference type="PROSITE-ProRule" id="PRU00406"/>
    </source>
</evidence>
<evidence type="ECO:0000256" key="5">
    <source>
        <dbReference type="SAM" id="MobiDB-lite"/>
    </source>
</evidence>
<evidence type="ECO:0000269" key="6">
    <source>
    </source>
</evidence>
<evidence type="ECO:0000303" key="7">
    <source>
    </source>
</evidence>
<evidence type="ECO:0000305" key="8"/>
<evidence type="ECO:0000312" key="9">
    <source>
        <dbReference type="Proteomes" id="UP000000539"/>
    </source>
</evidence>
<proteinExistence type="evidence at protein level"/>
<feature type="chain" id="PRO_0000437123" description="Leiomodin-2">
    <location>
        <begin position="1"/>
        <end position="552"/>
    </location>
</feature>
<feature type="domain" description="WH2" evidence="4">
    <location>
        <begin position="526"/>
        <end position="545"/>
    </location>
</feature>
<feature type="region of interest" description="Interaction with actin 1" evidence="2">
    <location>
        <begin position="1"/>
        <end position="169"/>
    </location>
</feature>
<feature type="region of interest" description="Interaction with tropomyosin alpha" evidence="2">
    <location>
        <begin position="1"/>
        <end position="47"/>
    </location>
</feature>
<feature type="region of interest" description="Disordered" evidence="5">
    <location>
        <begin position="33"/>
        <end position="67"/>
    </location>
</feature>
<feature type="region of interest" description="Disordered" evidence="5">
    <location>
        <begin position="87"/>
        <end position="191"/>
    </location>
</feature>
<feature type="region of interest" description="Interaction with actin 2" evidence="2">
    <location>
        <begin position="170"/>
        <end position="498"/>
    </location>
</feature>
<feature type="region of interest" description="Disordered" evidence="5">
    <location>
        <begin position="364"/>
        <end position="531"/>
    </location>
</feature>
<feature type="region of interest" description="Interaction with actin 3" evidence="2">
    <location>
        <begin position="526"/>
        <end position="545"/>
    </location>
</feature>
<feature type="coiled-coil region" evidence="3">
    <location>
        <begin position="13"/>
        <end position="46"/>
    </location>
</feature>
<feature type="coiled-coil region" evidence="3">
    <location>
        <begin position="86"/>
        <end position="151"/>
    </location>
</feature>
<feature type="compositionally biased region" description="Polar residues" evidence="5">
    <location>
        <begin position="51"/>
        <end position="64"/>
    </location>
</feature>
<feature type="compositionally biased region" description="Acidic residues" evidence="5">
    <location>
        <begin position="93"/>
        <end position="108"/>
    </location>
</feature>
<feature type="compositionally biased region" description="Acidic residues" evidence="5">
    <location>
        <begin position="115"/>
        <end position="147"/>
    </location>
</feature>
<feature type="compositionally biased region" description="Basic and acidic residues" evidence="5">
    <location>
        <begin position="364"/>
        <end position="377"/>
    </location>
</feature>
<feature type="compositionally biased region" description="Low complexity" evidence="5">
    <location>
        <begin position="398"/>
        <end position="415"/>
    </location>
</feature>
<feature type="compositionally biased region" description="Pro residues" evidence="5">
    <location>
        <begin position="425"/>
        <end position="450"/>
    </location>
</feature>
<feature type="compositionally biased region" description="Basic residues" evidence="5">
    <location>
        <begin position="478"/>
        <end position="488"/>
    </location>
</feature>
<feature type="compositionally biased region" description="Basic and acidic residues" evidence="5">
    <location>
        <begin position="489"/>
        <end position="513"/>
    </location>
</feature>
<feature type="compositionally biased region" description="Polar residues" evidence="5">
    <location>
        <begin position="514"/>
        <end position="524"/>
    </location>
</feature>
<reference key="1">
    <citation type="journal article" date="2004" name="Nature">
        <title>Sequence and comparative analysis of the chicken genome provide unique perspectives on vertebrate evolution.</title>
        <authorList>
            <person name="Hillier L.W."/>
            <person name="Miller W."/>
            <person name="Birney E."/>
            <person name="Warren W."/>
            <person name="Hardison R.C."/>
            <person name="Ponting C.P."/>
            <person name="Bork P."/>
            <person name="Burt D.W."/>
            <person name="Groenen M.A.M."/>
            <person name="Delany M.E."/>
            <person name="Dodgson J.B."/>
            <person name="Chinwalla A.T."/>
            <person name="Cliften P.F."/>
            <person name="Clifton S.W."/>
            <person name="Delehaunty K.D."/>
            <person name="Fronick C."/>
            <person name="Fulton R.S."/>
            <person name="Graves T.A."/>
            <person name="Kremitzki C."/>
            <person name="Layman D."/>
            <person name="Magrini V."/>
            <person name="McPherson J.D."/>
            <person name="Miner T.L."/>
            <person name="Minx P."/>
            <person name="Nash W.E."/>
            <person name="Nhan M.N."/>
            <person name="Nelson J.O."/>
            <person name="Oddy L.G."/>
            <person name="Pohl C.S."/>
            <person name="Randall-Maher J."/>
            <person name="Smith S.M."/>
            <person name="Wallis J.W."/>
            <person name="Yang S.-P."/>
            <person name="Romanov M.N."/>
            <person name="Rondelli C.M."/>
            <person name="Paton B."/>
            <person name="Smith J."/>
            <person name="Morrice D."/>
            <person name="Daniels L."/>
            <person name="Tempest H.G."/>
            <person name="Robertson L."/>
            <person name="Masabanda J.S."/>
            <person name="Griffin D.K."/>
            <person name="Vignal A."/>
            <person name="Fillon V."/>
            <person name="Jacobbson L."/>
            <person name="Kerje S."/>
            <person name="Andersson L."/>
            <person name="Crooijmans R.P."/>
            <person name="Aerts J."/>
            <person name="van der Poel J.J."/>
            <person name="Ellegren H."/>
            <person name="Caldwell R.B."/>
            <person name="Hubbard S.J."/>
            <person name="Grafham D.V."/>
            <person name="Kierzek A.M."/>
            <person name="McLaren S.R."/>
            <person name="Overton I.M."/>
            <person name="Arakawa H."/>
            <person name="Beattie K.J."/>
            <person name="Bezzubov Y."/>
            <person name="Boardman P.E."/>
            <person name="Bonfield J.K."/>
            <person name="Croning M.D.R."/>
            <person name="Davies R.M."/>
            <person name="Francis M.D."/>
            <person name="Humphray S.J."/>
            <person name="Scott C.E."/>
            <person name="Taylor R.G."/>
            <person name="Tickle C."/>
            <person name="Brown W.R.A."/>
            <person name="Rogers J."/>
            <person name="Buerstedde J.-M."/>
            <person name="Wilson S.A."/>
            <person name="Stubbs L."/>
            <person name="Ovcharenko I."/>
            <person name="Gordon L."/>
            <person name="Lucas S."/>
            <person name="Miller M.M."/>
            <person name="Inoko H."/>
            <person name="Shiina T."/>
            <person name="Kaufman J."/>
            <person name="Salomonsen J."/>
            <person name="Skjoedt K."/>
            <person name="Wong G.K.-S."/>
            <person name="Wang J."/>
            <person name="Liu B."/>
            <person name="Wang J."/>
            <person name="Yu J."/>
            <person name="Yang H."/>
            <person name="Nefedov M."/>
            <person name="Koriabine M."/>
            <person name="Dejong P.J."/>
            <person name="Goodstadt L."/>
            <person name="Webber C."/>
            <person name="Dickens N.J."/>
            <person name="Letunic I."/>
            <person name="Suyama M."/>
            <person name="Torrents D."/>
            <person name="von Mering C."/>
            <person name="Zdobnov E.M."/>
            <person name="Makova K."/>
            <person name="Nekrutenko A."/>
            <person name="Elnitski L."/>
            <person name="Eswara P."/>
            <person name="King D.C."/>
            <person name="Yang S.-P."/>
            <person name="Tyekucheva S."/>
            <person name="Radakrishnan A."/>
            <person name="Harris R.S."/>
            <person name="Chiaromonte F."/>
            <person name="Taylor J."/>
            <person name="He J."/>
            <person name="Rijnkels M."/>
            <person name="Griffiths-Jones S."/>
            <person name="Ureta-Vidal A."/>
            <person name="Hoffman M.M."/>
            <person name="Severin J."/>
            <person name="Searle S.M.J."/>
            <person name="Law A.S."/>
            <person name="Speed D."/>
            <person name="Waddington D."/>
            <person name="Cheng Z."/>
            <person name="Tuzun E."/>
            <person name="Eichler E."/>
            <person name="Bao Z."/>
            <person name="Flicek P."/>
            <person name="Shteynberg D.D."/>
            <person name="Brent M.R."/>
            <person name="Bye J.M."/>
            <person name="Huckle E.J."/>
            <person name="Chatterji S."/>
            <person name="Dewey C."/>
            <person name="Pachter L."/>
            <person name="Kouranov A."/>
            <person name="Mourelatos Z."/>
            <person name="Hatzigeorgiou A.G."/>
            <person name="Paterson A.H."/>
            <person name="Ivarie R."/>
            <person name="Brandstrom M."/>
            <person name="Axelsson E."/>
            <person name="Backstrom N."/>
            <person name="Berlin S."/>
            <person name="Webster M.T."/>
            <person name="Pourquie O."/>
            <person name="Reymond A."/>
            <person name="Ucla C."/>
            <person name="Antonarakis S.E."/>
            <person name="Long M."/>
            <person name="Emerson J.J."/>
            <person name="Betran E."/>
            <person name="Dupanloup I."/>
            <person name="Kaessmann H."/>
            <person name="Hinrichs A.S."/>
            <person name="Bejerano G."/>
            <person name="Furey T.S."/>
            <person name="Harte R.A."/>
            <person name="Raney B."/>
            <person name="Siepel A."/>
            <person name="Kent W.J."/>
            <person name="Haussler D."/>
            <person name="Eyras E."/>
            <person name="Castelo R."/>
            <person name="Abril J.F."/>
            <person name="Castellano S."/>
            <person name="Camara F."/>
            <person name="Parra G."/>
            <person name="Guigo R."/>
            <person name="Bourque G."/>
            <person name="Tesler G."/>
            <person name="Pevzner P.A."/>
            <person name="Smit A."/>
            <person name="Fulton L.A."/>
            <person name="Mardis E.R."/>
            <person name="Wilson R.K."/>
        </authorList>
    </citation>
    <scope>NUCLEOTIDE SEQUENCE [LARGE SCALE GENOMIC DNA]</scope>
    <source>
        <strain>Red jungle fowl</strain>
    </source>
</reference>
<reference key="2">
    <citation type="journal article" date="2010" name="J. Cell Sci.">
        <title>Leiomodin-2 is an antagonist of tropomodulin-1 at the pointed end of the thin filaments in cardiac muscle.</title>
        <authorList>
            <person name="Tsukada T."/>
            <person name="Pappas C.T."/>
            <person name="Moroz N."/>
            <person name="Antin P.B."/>
            <person name="Kostyukova A.S."/>
            <person name="Gregorio C.C."/>
        </authorList>
    </citation>
    <scope>FUNCTION</scope>
    <scope>SUBCELLULAR LOCATION</scope>
    <scope>DEVELOPMENTAL STAGE</scope>
    <scope>ACTIN-BINDING</scope>
</reference>
<name>LMOD2_CHICK</name>